<protein>
    <recommendedName>
        <fullName>Peroxynitrite isomerase</fullName>
        <ecNumber evidence="1">5.99.-.-</ecNumber>
    </recommendedName>
    <alternativeName>
        <fullName>Ferric nitrobindin</fullName>
        <shortName>Nb(III)</shortName>
    </alternativeName>
</protein>
<accession>B1VQH0</accession>
<gene>
    <name type="ordered locus">SGR_442</name>
</gene>
<name>NB_STRGG</name>
<feature type="chain" id="PRO_0000356954" description="Peroxynitrite isomerase">
    <location>
        <begin position="1"/>
        <end position="185"/>
    </location>
</feature>
<feature type="region of interest" description="Disordered" evidence="2">
    <location>
        <begin position="1"/>
        <end position="21"/>
    </location>
</feature>
<feature type="short sequence motif" description="GXWXGXG" evidence="1">
    <location>
        <begin position="34"/>
        <end position="40"/>
    </location>
</feature>
<feature type="binding site" description="axial binding residue" evidence="1">
    <location>
        <position position="171"/>
    </location>
    <ligand>
        <name>heme b</name>
        <dbReference type="ChEBI" id="CHEBI:60344"/>
    </ligand>
    <ligandPart>
        <name>Fe</name>
        <dbReference type="ChEBI" id="CHEBI:18248"/>
    </ligandPart>
</feature>
<dbReference type="EC" id="5.99.-.-" evidence="1"/>
<dbReference type="EMBL" id="AP009493">
    <property type="protein sequence ID" value="BAG17271.1"/>
    <property type="molecule type" value="Genomic_DNA"/>
</dbReference>
<dbReference type="RefSeq" id="WP_012377796.1">
    <property type="nucleotide sequence ID" value="NC_010572.1"/>
</dbReference>
<dbReference type="SMR" id="B1VQH0"/>
<dbReference type="KEGG" id="sgr:SGR_442"/>
<dbReference type="PATRIC" id="fig|455632.4.peg.419"/>
<dbReference type="eggNOG" id="COG4044">
    <property type="taxonomic scope" value="Bacteria"/>
</dbReference>
<dbReference type="HOGENOM" id="CLU_085483_0_0_11"/>
<dbReference type="Proteomes" id="UP000001685">
    <property type="component" value="Chromosome"/>
</dbReference>
<dbReference type="GO" id="GO:0020037">
    <property type="term" value="F:heme binding"/>
    <property type="evidence" value="ECO:0007669"/>
    <property type="project" value="UniProtKB-UniRule"/>
</dbReference>
<dbReference type="GO" id="GO:0046872">
    <property type="term" value="F:metal ion binding"/>
    <property type="evidence" value="ECO:0007669"/>
    <property type="project" value="UniProtKB-KW"/>
</dbReference>
<dbReference type="GO" id="GO:0062213">
    <property type="term" value="F:peroxynitrite isomerase activity"/>
    <property type="evidence" value="ECO:0007669"/>
    <property type="project" value="UniProtKB-UniRule"/>
</dbReference>
<dbReference type="CDD" id="cd07828">
    <property type="entry name" value="lipocalin_heme-bd-THAP4-like"/>
    <property type="match status" value="1"/>
</dbReference>
<dbReference type="Gene3D" id="2.40.128.20">
    <property type="match status" value="1"/>
</dbReference>
<dbReference type="HAMAP" id="MF_01297">
    <property type="entry name" value="nitrobindin"/>
    <property type="match status" value="1"/>
</dbReference>
<dbReference type="InterPro" id="IPR012674">
    <property type="entry name" value="Calycin"/>
</dbReference>
<dbReference type="InterPro" id="IPR022939">
    <property type="entry name" value="Nb(III)_bact/plant"/>
</dbReference>
<dbReference type="InterPro" id="IPR045165">
    <property type="entry name" value="Nitrobindin"/>
</dbReference>
<dbReference type="InterPro" id="IPR014878">
    <property type="entry name" value="THAP4-like_heme-bd"/>
</dbReference>
<dbReference type="PANTHER" id="PTHR15854:SF4">
    <property type="entry name" value="PEROXYNITRITE ISOMERASE THAP4"/>
    <property type="match status" value="1"/>
</dbReference>
<dbReference type="PANTHER" id="PTHR15854">
    <property type="entry name" value="THAP4 PROTEIN"/>
    <property type="match status" value="1"/>
</dbReference>
<dbReference type="Pfam" id="PF08768">
    <property type="entry name" value="THAP4_heme-bd"/>
    <property type="match status" value="1"/>
</dbReference>
<dbReference type="SUPFAM" id="SSF50814">
    <property type="entry name" value="Lipocalins"/>
    <property type="match status" value="1"/>
</dbReference>
<sequence length="185" mass="20208">MHHPARELPFPDALRPGARPAPHPLLAPVTGYLGTWRGTGSGGYPTLDADFSYAQEVTFSHDGRPFLAYEARAWLLDADGQPLRPSARETGWWRLQPDGRVEALITQPTGIAEISVGHARDGAVDLATERVALAPTAKEVDATRRRYTLTDPDTLTFVHDLAAVGRPLQHHLSARLRREAPGQGI</sequence>
<organism>
    <name type="scientific">Streptomyces griseus subsp. griseus (strain JCM 4626 / CBS 651.72 / NBRC 13350 / KCC S-0626 / ISP 5235)</name>
    <dbReference type="NCBI Taxonomy" id="455632"/>
    <lineage>
        <taxon>Bacteria</taxon>
        <taxon>Bacillati</taxon>
        <taxon>Actinomycetota</taxon>
        <taxon>Actinomycetes</taxon>
        <taxon>Kitasatosporales</taxon>
        <taxon>Streptomycetaceae</taxon>
        <taxon>Streptomyces</taxon>
    </lineage>
</organism>
<proteinExistence type="inferred from homology"/>
<keyword id="KW-0349">Heme</keyword>
<keyword id="KW-0408">Iron</keyword>
<keyword id="KW-0413">Isomerase</keyword>
<keyword id="KW-0479">Metal-binding</keyword>
<reference key="1">
    <citation type="journal article" date="2008" name="J. Bacteriol.">
        <title>Genome sequence of the streptomycin-producing microorganism Streptomyces griseus IFO 13350.</title>
        <authorList>
            <person name="Ohnishi Y."/>
            <person name="Ishikawa J."/>
            <person name="Hara H."/>
            <person name="Suzuki H."/>
            <person name="Ikenoya M."/>
            <person name="Ikeda H."/>
            <person name="Yamashita A."/>
            <person name="Hattori M."/>
            <person name="Horinouchi S."/>
        </authorList>
    </citation>
    <scope>NUCLEOTIDE SEQUENCE [LARGE SCALE GENOMIC DNA]</scope>
    <source>
        <strain>JCM 4626 / CBS 651.72 / NBRC 13350 / KCC S-0626 / ISP 5235</strain>
    </source>
</reference>
<evidence type="ECO:0000255" key="1">
    <source>
        <dbReference type="HAMAP-Rule" id="MF_01297"/>
    </source>
</evidence>
<evidence type="ECO:0000256" key="2">
    <source>
        <dbReference type="SAM" id="MobiDB-lite"/>
    </source>
</evidence>
<comment type="function">
    <text evidence="1">Heme-binding protein able to scavenge peroxynitrite and to protect free L-tyrosine against peroxynitrite-mediated nitration, by acting as a peroxynitrite isomerase that converts peroxynitrite to nitrate. Therefore, this protein likely plays a role in peroxynitrite sensing and in the detoxification of reactive nitrogen and oxygen species (RNS and ROS, respectively). Is able to bind nitric oxide (NO) in vitro, but may act as a sensor of peroxynitrite levels in vivo.</text>
</comment>
<comment type="catalytic activity">
    <reaction evidence="1">
        <text>peroxynitrite = nitrate</text>
        <dbReference type="Rhea" id="RHEA:63116"/>
        <dbReference type="ChEBI" id="CHEBI:17632"/>
        <dbReference type="ChEBI" id="CHEBI:25941"/>
    </reaction>
    <physiologicalReaction direction="left-to-right" evidence="1">
        <dbReference type="Rhea" id="RHEA:63117"/>
    </physiologicalReaction>
</comment>
<comment type="cofactor">
    <cofactor evidence="1">
        <name>heme b</name>
        <dbReference type="ChEBI" id="CHEBI:60344"/>
    </cofactor>
    <text evidence="1">Binds 1 heme b group per subunit, that coordinates a highly solvent-exposed Fe(III) atom.</text>
</comment>
<comment type="pathway">
    <text evidence="1">Nitrogen metabolism.</text>
</comment>
<comment type="subunit">
    <text evidence="1">Homodimer.</text>
</comment>
<comment type="domain">
    <text evidence="1">Forms a 10-stranded antiparallel beta-barrel structure able to accommodate a hydrophobic ligand in its interior. In fact, this fold hosts the heme group, which is located in a wide surface cleft.</text>
</comment>
<comment type="similarity">
    <text evidence="1">Belongs to the nitrobindin family.</text>
</comment>